<feature type="chain" id="PRO_1000120898" description="Large ribosomal subunit protein uL10">
    <location>
        <begin position="1"/>
        <end position="162"/>
    </location>
</feature>
<evidence type="ECO:0000255" key="1">
    <source>
        <dbReference type="HAMAP-Rule" id="MF_00362"/>
    </source>
</evidence>
<evidence type="ECO:0000305" key="2"/>
<name>RL10_ACHLI</name>
<sequence length="162" mass="17725">MKKQLQRKVDQVATLTDKFKMAKTIVMFEYKGLSVANLTSLRSELHKENIDLKVYKNNITRRAAINAGFDALEPSLTGPLAVAISYDDVVAPAKIINEFAKKNKTVVITSGVIEAKVADQVAIMALANLPSRETLLTQLAAGLLMPVKEIAIGLNMLLETKE</sequence>
<organism>
    <name type="scientific">Acholeplasma laidlawii (strain PG-8A)</name>
    <dbReference type="NCBI Taxonomy" id="441768"/>
    <lineage>
        <taxon>Bacteria</taxon>
        <taxon>Bacillati</taxon>
        <taxon>Mycoplasmatota</taxon>
        <taxon>Mollicutes</taxon>
        <taxon>Acholeplasmatales</taxon>
        <taxon>Acholeplasmataceae</taxon>
        <taxon>Acholeplasma</taxon>
    </lineage>
</organism>
<reference key="1">
    <citation type="journal article" date="2011" name="J. Bacteriol.">
        <title>Complete genome and proteome of Acholeplasma laidlawii.</title>
        <authorList>
            <person name="Lazarev V.N."/>
            <person name="Levitskii S.A."/>
            <person name="Basovskii Y.I."/>
            <person name="Chukin M.M."/>
            <person name="Akopian T.A."/>
            <person name="Vereshchagin V.V."/>
            <person name="Kostrjukova E.S."/>
            <person name="Kovaleva G.Y."/>
            <person name="Kazanov M.D."/>
            <person name="Malko D.B."/>
            <person name="Vitreschak A.G."/>
            <person name="Sernova N.V."/>
            <person name="Gelfand M.S."/>
            <person name="Demina I.A."/>
            <person name="Serebryakova M.V."/>
            <person name="Galyamina M.A."/>
            <person name="Vtyurin N.N."/>
            <person name="Rogov S.I."/>
            <person name="Alexeev D.G."/>
            <person name="Ladygina V.G."/>
            <person name="Govorun V.M."/>
        </authorList>
    </citation>
    <scope>NUCLEOTIDE SEQUENCE [LARGE SCALE GENOMIC DNA]</scope>
    <source>
        <strain>PG-8A</strain>
    </source>
</reference>
<gene>
    <name evidence="1" type="primary">rplJ</name>
    <name type="ordered locus">ACL_0168</name>
</gene>
<dbReference type="EMBL" id="CP000896">
    <property type="protein sequence ID" value="ABX80794.1"/>
    <property type="molecule type" value="Genomic_DNA"/>
</dbReference>
<dbReference type="RefSeq" id="WP_012242125.1">
    <property type="nucleotide sequence ID" value="NC_010163.1"/>
</dbReference>
<dbReference type="SMR" id="A9NEL4"/>
<dbReference type="STRING" id="441768.ACL_0168"/>
<dbReference type="GeneID" id="41338361"/>
<dbReference type="KEGG" id="acl:ACL_0168"/>
<dbReference type="eggNOG" id="COG0244">
    <property type="taxonomic scope" value="Bacteria"/>
</dbReference>
<dbReference type="HOGENOM" id="CLU_092227_2_1_14"/>
<dbReference type="OrthoDB" id="9808307at2"/>
<dbReference type="Proteomes" id="UP000008558">
    <property type="component" value="Chromosome"/>
</dbReference>
<dbReference type="GO" id="GO:0015934">
    <property type="term" value="C:large ribosomal subunit"/>
    <property type="evidence" value="ECO:0007669"/>
    <property type="project" value="InterPro"/>
</dbReference>
<dbReference type="GO" id="GO:0070180">
    <property type="term" value="F:large ribosomal subunit rRNA binding"/>
    <property type="evidence" value="ECO:0007669"/>
    <property type="project" value="UniProtKB-UniRule"/>
</dbReference>
<dbReference type="GO" id="GO:0003735">
    <property type="term" value="F:structural constituent of ribosome"/>
    <property type="evidence" value="ECO:0007669"/>
    <property type="project" value="InterPro"/>
</dbReference>
<dbReference type="GO" id="GO:0006412">
    <property type="term" value="P:translation"/>
    <property type="evidence" value="ECO:0007669"/>
    <property type="project" value="UniProtKB-UniRule"/>
</dbReference>
<dbReference type="CDD" id="cd05797">
    <property type="entry name" value="Ribosomal_L10"/>
    <property type="match status" value="1"/>
</dbReference>
<dbReference type="Gene3D" id="3.30.70.1730">
    <property type="match status" value="1"/>
</dbReference>
<dbReference type="HAMAP" id="MF_00362">
    <property type="entry name" value="Ribosomal_uL10"/>
    <property type="match status" value="1"/>
</dbReference>
<dbReference type="InterPro" id="IPR001790">
    <property type="entry name" value="Ribosomal_uL10"/>
</dbReference>
<dbReference type="InterPro" id="IPR043141">
    <property type="entry name" value="Ribosomal_uL10-like_sf"/>
</dbReference>
<dbReference type="InterPro" id="IPR022973">
    <property type="entry name" value="Ribosomal_uL10_bac"/>
</dbReference>
<dbReference type="InterPro" id="IPR047865">
    <property type="entry name" value="Ribosomal_uL10_bac_type"/>
</dbReference>
<dbReference type="InterPro" id="IPR002363">
    <property type="entry name" value="Ribosomal_uL10_CS_bac"/>
</dbReference>
<dbReference type="NCBIfam" id="NF000955">
    <property type="entry name" value="PRK00099.1-1"/>
    <property type="match status" value="1"/>
</dbReference>
<dbReference type="PANTHER" id="PTHR11560">
    <property type="entry name" value="39S RIBOSOMAL PROTEIN L10, MITOCHONDRIAL"/>
    <property type="match status" value="1"/>
</dbReference>
<dbReference type="Pfam" id="PF00466">
    <property type="entry name" value="Ribosomal_L10"/>
    <property type="match status" value="1"/>
</dbReference>
<dbReference type="SUPFAM" id="SSF160369">
    <property type="entry name" value="Ribosomal protein L10-like"/>
    <property type="match status" value="1"/>
</dbReference>
<dbReference type="PROSITE" id="PS01109">
    <property type="entry name" value="RIBOSOMAL_L10"/>
    <property type="match status" value="1"/>
</dbReference>
<comment type="function">
    <text evidence="1">Forms part of the ribosomal stalk, playing a central role in the interaction of the ribosome with GTP-bound translation factors.</text>
</comment>
<comment type="subunit">
    <text evidence="1">Part of the ribosomal stalk of the 50S ribosomal subunit. The N-terminus interacts with L11 and the large rRNA to form the base of the stalk. The C-terminus forms an elongated spine to which L12 dimers bind in a sequential fashion forming a multimeric L10(L12)X complex.</text>
</comment>
<comment type="similarity">
    <text evidence="1">Belongs to the universal ribosomal protein uL10 family.</text>
</comment>
<proteinExistence type="inferred from homology"/>
<accession>A9NEL4</accession>
<protein>
    <recommendedName>
        <fullName evidence="1">Large ribosomal subunit protein uL10</fullName>
    </recommendedName>
    <alternativeName>
        <fullName evidence="2">50S ribosomal protein L10</fullName>
    </alternativeName>
</protein>
<keyword id="KW-1185">Reference proteome</keyword>
<keyword id="KW-0687">Ribonucleoprotein</keyword>
<keyword id="KW-0689">Ribosomal protein</keyword>
<keyword id="KW-0694">RNA-binding</keyword>
<keyword id="KW-0699">rRNA-binding</keyword>